<comment type="function">
    <text evidence="1">Catalyzes the attachment of threonine to tRNA(Thr) in a two-step reaction: L-threonine is first activated by ATP to form Thr-AMP and then transferred to the acceptor end of tRNA(Thr). Also edits incorrectly charged L-seryl-tRNA(Thr).</text>
</comment>
<comment type="catalytic activity">
    <reaction evidence="1">
        <text>tRNA(Thr) + L-threonine + ATP = L-threonyl-tRNA(Thr) + AMP + diphosphate + H(+)</text>
        <dbReference type="Rhea" id="RHEA:24624"/>
        <dbReference type="Rhea" id="RHEA-COMP:9670"/>
        <dbReference type="Rhea" id="RHEA-COMP:9704"/>
        <dbReference type="ChEBI" id="CHEBI:15378"/>
        <dbReference type="ChEBI" id="CHEBI:30616"/>
        <dbReference type="ChEBI" id="CHEBI:33019"/>
        <dbReference type="ChEBI" id="CHEBI:57926"/>
        <dbReference type="ChEBI" id="CHEBI:78442"/>
        <dbReference type="ChEBI" id="CHEBI:78534"/>
        <dbReference type="ChEBI" id="CHEBI:456215"/>
        <dbReference type="EC" id="6.1.1.3"/>
    </reaction>
</comment>
<comment type="cofactor">
    <cofactor evidence="1">
        <name>Zn(2+)</name>
        <dbReference type="ChEBI" id="CHEBI:29105"/>
    </cofactor>
    <text evidence="1">Binds 1 zinc ion per subunit.</text>
</comment>
<comment type="subunit">
    <text evidence="1">Homodimer.</text>
</comment>
<comment type="subcellular location">
    <subcellularLocation>
        <location evidence="1">Cytoplasm</location>
    </subcellularLocation>
</comment>
<comment type="similarity">
    <text evidence="1">Belongs to the class-II aminoacyl-tRNA synthetase family.</text>
</comment>
<dbReference type="EC" id="6.1.1.3" evidence="1"/>
<dbReference type="EMBL" id="CP001110">
    <property type="protein sequence ID" value="ACF42514.1"/>
    <property type="molecule type" value="Genomic_DNA"/>
</dbReference>
<dbReference type="RefSeq" id="WP_012507012.1">
    <property type="nucleotide sequence ID" value="NC_011060.1"/>
</dbReference>
<dbReference type="SMR" id="B4SB93"/>
<dbReference type="STRING" id="324925.Ppha_0176"/>
<dbReference type="KEGG" id="pph:Ppha_0176"/>
<dbReference type="eggNOG" id="COG0441">
    <property type="taxonomic scope" value="Bacteria"/>
</dbReference>
<dbReference type="HOGENOM" id="CLU_008554_0_1_10"/>
<dbReference type="OrthoDB" id="9802304at2"/>
<dbReference type="Proteomes" id="UP000002724">
    <property type="component" value="Chromosome"/>
</dbReference>
<dbReference type="GO" id="GO:0005737">
    <property type="term" value="C:cytoplasm"/>
    <property type="evidence" value="ECO:0007669"/>
    <property type="project" value="UniProtKB-SubCell"/>
</dbReference>
<dbReference type="GO" id="GO:0005524">
    <property type="term" value="F:ATP binding"/>
    <property type="evidence" value="ECO:0007669"/>
    <property type="project" value="UniProtKB-UniRule"/>
</dbReference>
<dbReference type="GO" id="GO:0046872">
    <property type="term" value="F:metal ion binding"/>
    <property type="evidence" value="ECO:0007669"/>
    <property type="project" value="UniProtKB-KW"/>
</dbReference>
<dbReference type="GO" id="GO:0004829">
    <property type="term" value="F:threonine-tRNA ligase activity"/>
    <property type="evidence" value="ECO:0007669"/>
    <property type="project" value="UniProtKB-UniRule"/>
</dbReference>
<dbReference type="GO" id="GO:0000049">
    <property type="term" value="F:tRNA binding"/>
    <property type="evidence" value="ECO:0007669"/>
    <property type="project" value="UniProtKB-KW"/>
</dbReference>
<dbReference type="GO" id="GO:0006435">
    <property type="term" value="P:threonyl-tRNA aminoacylation"/>
    <property type="evidence" value="ECO:0007669"/>
    <property type="project" value="UniProtKB-UniRule"/>
</dbReference>
<dbReference type="CDD" id="cd01667">
    <property type="entry name" value="TGS_ThrRS"/>
    <property type="match status" value="1"/>
</dbReference>
<dbReference type="CDD" id="cd00860">
    <property type="entry name" value="ThrRS_anticodon"/>
    <property type="match status" value="1"/>
</dbReference>
<dbReference type="CDD" id="cd00771">
    <property type="entry name" value="ThrRS_core"/>
    <property type="match status" value="1"/>
</dbReference>
<dbReference type="FunFam" id="3.30.930.10:FF:000002">
    <property type="entry name" value="Threonine--tRNA ligase"/>
    <property type="match status" value="1"/>
</dbReference>
<dbReference type="FunFam" id="3.40.50.800:FF:000001">
    <property type="entry name" value="Threonine--tRNA ligase"/>
    <property type="match status" value="1"/>
</dbReference>
<dbReference type="FunFam" id="3.30.980.10:FF:000005">
    <property type="entry name" value="Threonyl-tRNA synthetase, mitochondrial"/>
    <property type="match status" value="1"/>
</dbReference>
<dbReference type="Gene3D" id="3.10.20.30">
    <property type="match status" value="1"/>
</dbReference>
<dbReference type="Gene3D" id="3.30.54.20">
    <property type="match status" value="1"/>
</dbReference>
<dbReference type="Gene3D" id="3.40.50.800">
    <property type="entry name" value="Anticodon-binding domain"/>
    <property type="match status" value="1"/>
</dbReference>
<dbReference type="Gene3D" id="3.30.930.10">
    <property type="entry name" value="Bira Bifunctional Protein, Domain 2"/>
    <property type="match status" value="1"/>
</dbReference>
<dbReference type="Gene3D" id="3.30.980.10">
    <property type="entry name" value="Threonyl-trna Synthetase, Chain A, domain 2"/>
    <property type="match status" value="1"/>
</dbReference>
<dbReference type="HAMAP" id="MF_00184">
    <property type="entry name" value="Thr_tRNA_synth"/>
    <property type="match status" value="1"/>
</dbReference>
<dbReference type="InterPro" id="IPR002314">
    <property type="entry name" value="aa-tRNA-synt_IIb"/>
</dbReference>
<dbReference type="InterPro" id="IPR006195">
    <property type="entry name" value="aa-tRNA-synth_II"/>
</dbReference>
<dbReference type="InterPro" id="IPR045864">
    <property type="entry name" value="aa-tRNA-synth_II/BPL/LPL"/>
</dbReference>
<dbReference type="InterPro" id="IPR004154">
    <property type="entry name" value="Anticodon-bd"/>
</dbReference>
<dbReference type="InterPro" id="IPR036621">
    <property type="entry name" value="Anticodon-bd_dom_sf"/>
</dbReference>
<dbReference type="InterPro" id="IPR012675">
    <property type="entry name" value="Beta-grasp_dom_sf"/>
</dbReference>
<dbReference type="InterPro" id="IPR004095">
    <property type="entry name" value="TGS"/>
</dbReference>
<dbReference type="InterPro" id="IPR012676">
    <property type="entry name" value="TGS-like"/>
</dbReference>
<dbReference type="InterPro" id="IPR002320">
    <property type="entry name" value="Thr-tRNA-ligase_IIa"/>
</dbReference>
<dbReference type="InterPro" id="IPR018163">
    <property type="entry name" value="Thr/Ala-tRNA-synth_IIc_edit"/>
</dbReference>
<dbReference type="InterPro" id="IPR047246">
    <property type="entry name" value="ThrRS_anticodon"/>
</dbReference>
<dbReference type="InterPro" id="IPR033728">
    <property type="entry name" value="ThrRS_core"/>
</dbReference>
<dbReference type="InterPro" id="IPR012947">
    <property type="entry name" value="tRNA_SAD"/>
</dbReference>
<dbReference type="NCBIfam" id="TIGR00418">
    <property type="entry name" value="thrS"/>
    <property type="match status" value="1"/>
</dbReference>
<dbReference type="PANTHER" id="PTHR11451:SF44">
    <property type="entry name" value="THREONINE--TRNA LIGASE, CHLOROPLASTIC_MITOCHONDRIAL 2"/>
    <property type="match status" value="1"/>
</dbReference>
<dbReference type="PANTHER" id="PTHR11451">
    <property type="entry name" value="THREONINE-TRNA LIGASE"/>
    <property type="match status" value="1"/>
</dbReference>
<dbReference type="Pfam" id="PF03129">
    <property type="entry name" value="HGTP_anticodon"/>
    <property type="match status" value="1"/>
</dbReference>
<dbReference type="Pfam" id="PF02824">
    <property type="entry name" value="TGS"/>
    <property type="match status" value="1"/>
</dbReference>
<dbReference type="Pfam" id="PF00587">
    <property type="entry name" value="tRNA-synt_2b"/>
    <property type="match status" value="1"/>
</dbReference>
<dbReference type="Pfam" id="PF07973">
    <property type="entry name" value="tRNA_SAD"/>
    <property type="match status" value="1"/>
</dbReference>
<dbReference type="PRINTS" id="PR01047">
    <property type="entry name" value="TRNASYNTHTHR"/>
</dbReference>
<dbReference type="SMART" id="SM00863">
    <property type="entry name" value="tRNA_SAD"/>
    <property type="match status" value="1"/>
</dbReference>
<dbReference type="SUPFAM" id="SSF52954">
    <property type="entry name" value="Class II aaRS ABD-related"/>
    <property type="match status" value="1"/>
</dbReference>
<dbReference type="SUPFAM" id="SSF55681">
    <property type="entry name" value="Class II aaRS and biotin synthetases"/>
    <property type="match status" value="1"/>
</dbReference>
<dbReference type="SUPFAM" id="SSF81271">
    <property type="entry name" value="TGS-like"/>
    <property type="match status" value="1"/>
</dbReference>
<dbReference type="SUPFAM" id="SSF55186">
    <property type="entry name" value="ThrRS/AlaRS common domain"/>
    <property type="match status" value="1"/>
</dbReference>
<dbReference type="PROSITE" id="PS50862">
    <property type="entry name" value="AA_TRNA_LIGASE_II"/>
    <property type="match status" value="1"/>
</dbReference>
<dbReference type="PROSITE" id="PS51880">
    <property type="entry name" value="TGS"/>
    <property type="match status" value="1"/>
</dbReference>
<feature type="chain" id="PRO_1000098591" description="Threonine--tRNA ligase">
    <location>
        <begin position="1"/>
        <end position="657"/>
    </location>
</feature>
<feature type="domain" description="TGS" evidence="2">
    <location>
        <begin position="7"/>
        <end position="70"/>
    </location>
</feature>
<feature type="region of interest" description="Catalytic" evidence="1">
    <location>
        <begin position="253"/>
        <end position="555"/>
    </location>
</feature>
<feature type="binding site" evidence="1">
    <location>
        <position position="351"/>
    </location>
    <ligand>
        <name>Zn(2+)</name>
        <dbReference type="ChEBI" id="CHEBI:29105"/>
    </ligand>
</feature>
<feature type="binding site" evidence="1">
    <location>
        <position position="402"/>
    </location>
    <ligand>
        <name>Zn(2+)</name>
        <dbReference type="ChEBI" id="CHEBI:29105"/>
    </ligand>
</feature>
<feature type="binding site" evidence="1">
    <location>
        <position position="532"/>
    </location>
    <ligand>
        <name>Zn(2+)</name>
        <dbReference type="ChEBI" id="CHEBI:29105"/>
    </ligand>
</feature>
<protein>
    <recommendedName>
        <fullName evidence="1">Threonine--tRNA ligase</fullName>
        <ecNumber evidence="1">6.1.1.3</ecNumber>
    </recommendedName>
    <alternativeName>
        <fullName evidence="1">Threonyl-tRNA synthetase</fullName>
        <shortName evidence="1">ThrRS</shortName>
    </alternativeName>
</protein>
<gene>
    <name evidence="1" type="primary">thrS</name>
    <name type="ordered locus">Ppha_0176</name>
</gene>
<organism>
    <name type="scientific">Pelodictyon phaeoclathratiforme (strain DSM 5477 / BU-1)</name>
    <dbReference type="NCBI Taxonomy" id="324925"/>
    <lineage>
        <taxon>Bacteria</taxon>
        <taxon>Pseudomonadati</taxon>
        <taxon>Chlorobiota</taxon>
        <taxon>Chlorobiia</taxon>
        <taxon>Chlorobiales</taxon>
        <taxon>Chlorobiaceae</taxon>
        <taxon>Chlorobium/Pelodictyon group</taxon>
        <taxon>Pelodictyon</taxon>
    </lineage>
</organism>
<sequence length="657" mass="74326">MSDNQDILAVIALTLPDGSVKTFPIGTTGNDVALSIGRKLAQDALALRVNGVAIDLSTPLTADAAIEIITFSSPAGQDIFWHSSSHLMAQAIEELYPGSKFGAGPSIEQGFYYDVASTHRFREEDLRKIEERMLEISKRDIQIRREEMSRTDAIEFFKTVRNDPYKVEILEDTLKEVERVSLYHQDGFTDLCIGPHIPSTSKVKAVLLSNISSSYWRGDSARENMQRIYGITFPSEKLLKEHVARLEEAKRRDHRKLGAELELFMLSPEVGSGLPIWLPKGAIIRNELETFLKEEQRKRGYLPVYTPHIGNIELYKRSGHYPYYSDSQFPPLTYHDEEGKQEQYLLKPMNCPHHHLIYSSKMRSYRDLPLRLTEFGTVYRHEQSGELNGLVRARGFTQDDSHIYCRPDQLVDEICSAIELTQFVFGTLGFSEVQTRLSMHDPENQAKYGGTAEVWEQAEKDVQEAADRMGIDYFIGVGEASFYGPKIDFIVRDALGRKWQLGTVQVDYVMPERFDLTYTGSDGQKHRPVVIHRAPFGSMERFIGVLIEHTAGNFPLWLAPVQAVVLPIAEDVLDYAKSVHQALLAAGIRAELDTRSEKIGKKIRDAEVSKIPCMIVIGQKEQESGEVSLRRHRIGDEGRFSVSGLIEKLKTEITGKS</sequence>
<reference key="1">
    <citation type="submission" date="2008-06" db="EMBL/GenBank/DDBJ databases">
        <title>Complete sequence of Pelodictyon phaeoclathratiforme BU-1.</title>
        <authorList>
            <consortium name="US DOE Joint Genome Institute"/>
            <person name="Lucas S."/>
            <person name="Copeland A."/>
            <person name="Lapidus A."/>
            <person name="Glavina del Rio T."/>
            <person name="Dalin E."/>
            <person name="Tice H."/>
            <person name="Bruce D."/>
            <person name="Goodwin L."/>
            <person name="Pitluck S."/>
            <person name="Schmutz J."/>
            <person name="Larimer F."/>
            <person name="Land M."/>
            <person name="Hauser L."/>
            <person name="Kyrpides N."/>
            <person name="Mikhailova N."/>
            <person name="Liu Z."/>
            <person name="Li T."/>
            <person name="Zhao F."/>
            <person name="Overmann J."/>
            <person name="Bryant D.A."/>
            <person name="Richardson P."/>
        </authorList>
    </citation>
    <scope>NUCLEOTIDE SEQUENCE [LARGE SCALE GENOMIC DNA]</scope>
    <source>
        <strain>DSM 5477 / BU-1</strain>
    </source>
</reference>
<name>SYT_PELPB</name>
<proteinExistence type="inferred from homology"/>
<evidence type="ECO:0000255" key="1">
    <source>
        <dbReference type="HAMAP-Rule" id="MF_00184"/>
    </source>
</evidence>
<evidence type="ECO:0000255" key="2">
    <source>
        <dbReference type="PROSITE-ProRule" id="PRU01228"/>
    </source>
</evidence>
<keyword id="KW-0030">Aminoacyl-tRNA synthetase</keyword>
<keyword id="KW-0067">ATP-binding</keyword>
<keyword id="KW-0963">Cytoplasm</keyword>
<keyword id="KW-0436">Ligase</keyword>
<keyword id="KW-0479">Metal-binding</keyword>
<keyword id="KW-0547">Nucleotide-binding</keyword>
<keyword id="KW-0648">Protein biosynthesis</keyword>
<keyword id="KW-1185">Reference proteome</keyword>
<keyword id="KW-0694">RNA-binding</keyword>
<keyword id="KW-0820">tRNA-binding</keyword>
<keyword id="KW-0862">Zinc</keyword>
<accession>B4SB93</accession>